<proteinExistence type="inferred from homology"/>
<evidence type="ECO:0000255" key="1">
    <source>
        <dbReference type="HAMAP-Rule" id="MF_00433"/>
    </source>
</evidence>
<gene>
    <name evidence="1" type="primary">petL</name>
</gene>
<name>PETL_PHAAO</name>
<organism>
    <name type="scientific">Phalaenopsis aphrodite subsp. formosana</name>
    <name type="common">Moth orchid</name>
    <dbReference type="NCBI Taxonomy" id="308872"/>
    <lineage>
        <taxon>Eukaryota</taxon>
        <taxon>Viridiplantae</taxon>
        <taxon>Streptophyta</taxon>
        <taxon>Embryophyta</taxon>
        <taxon>Tracheophyta</taxon>
        <taxon>Spermatophyta</taxon>
        <taxon>Magnoliopsida</taxon>
        <taxon>Liliopsida</taxon>
        <taxon>Asparagales</taxon>
        <taxon>Orchidaceae</taxon>
        <taxon>Epidendroideae</taxon>
        <taxon>Vandeae</taxon>
        <taxon>Aeridinae</taxon>
        <taxon>Phalaenopsis</taxon>
    </lineage>
</organism>
<dbReference type="EMBL" id="AY916449">
    <property type="protein sequence ID" value="AAW82518.1"/>
    <property type="molecule type" value="Genomic_DNA"/>
</dbReference>
<dbReference type="RefSeq" id="YP_358596.1">
    <property type="nucleotide sequence ID" value="NC_007499.1"/>
</dbReference>
<dbReference type="SMR" id="Q3BAM2"/>
<dbReference type="GO" id="GO:0009535">
    <property type="term" value="C:chloroplast thylakoid membrane"/>
    <property type="evidence" value="ECO:0007669"/>
    <property type="project" value="UniProtKB-SubCell"/>
</dbReference>
<dbReference type="GO" id="GO:0009512">
    <property type="term" value="C:cytochrome b6f complex"/>
    <property type="evidence" value="ECO:0007669"/>
    <property type="project" value="InterPro"/>
</dbReference>
<dbReference type="GO" id="GO:0045158">
    <property type="term" value="F:electron transporter, transferring electrons within cytochrome b6/f complex of photosystem II activity"/>
    <property type="evidence" value="ECO:0007669"/>
    <property type="project" value="UniProtKB-UniRule"/>
</dbReference>
<dbReference type="GO" id="GO:0015979">
    <property type="term" value="P:photosynthesis"/>
    <property type="evidence" value="ECO:0007669"/>
    <property type="project" value="UniProtKB-KW"/>
</dbReference>
<dbReference type="HAMAP" id="MF_00433">
    <property type="entry name" value="Cytb6_f_PetL"/>
    <property type="match status" value="1"/>
</dbReference>
<dbReference type="InterPro" id="IPR007802">
    <property type="entry name" value="Cyt_b6/f_cplx_su6"/>
</dbReference>
<dbReference type="PANTHER" id="PTHR37266">
    <property type="entry name" value="CYTOCHROME B6-F COMPLEX SUBUNIT 6"/>
    <property type="match status" value="1"/>
</dbReference>
<dbReference type="PANTHER" id="PTHR37266:SF1">
    <property type="entry name" value="CYTOCHROME B6-F COMPLEX SUBUNIT 6"/>
    <property type="match status" value="1"/>
</dbReference>
<dbReference type="Pfam" id="PF05115">
    <property type="entry name" value="PetL"/>
    <property type="match status" value="1"/>
</dbReference>
<geneLocation type="chloroplast"/>
<feature type="chain" id="PRO_0000233681" description="Cytochrome b6-f complex subunit 6">
    <location>
        <begin position="1"/>
        <end position="31"/>
    </location>
</feature>
<feature type="transmembrane region" description="Helical" evidence="1">
    <location>
        <begin position="4"/>
        <end position="26"/>
    </location>
</feature>
<keyword id="KW-0150">Chloroplast</keyword>
<keyword id="KW-0249">Electron transport</keyword>
<keyword id="KW-0472">Membrane</keyword>
<keyword id="KW-0602">Photosynthesis</keyword>
<keyword id="KW-0934">Plastid</keyword>
<keyword id="KW-0793">Thylakoid</keyword>
<keyword id="KW-0812">Transmembrane</keyword>
<keyword id="KW-1133">Transmembrane helix</keyword>
<keyword id="KW-0813">Transport</keyword>
<sequence>MPILTSYFGFLLAASTITPALFIGLNKIRLI</sequence>
<accession>Q3BAM2</accession>
<protein>
    <recommendedName>
        <fullName evidence="1">Cytochrome b6-f complex subunit 6</fullName>
    </recommendedName>
    <alternativeName>
        <fullName evidence="1">Cytochrome b6-f complex subunit PetL</fullName>
    </alternativeName>
    <alternativeName>
        <fullName evidence="1">Cytochrome b6-f complex subunit VI</fullName>
    </alternativeName>
</protein>
<reference key="1">
    <citation type="journal article" date="2006" name="Mol. Biol. Evol.">
        <title>The chloroplast genome of Phalaenopsis aphrodite (Orchidaceae): comparative analysis of evolutionary rate with that of grasses and its phylogenetic implications.</title>
        <authorList>
            <person name="Chang C.-C."/>
            <person name="Lin H.-C."/>
            <person name="Lin I.-P."/>
            <person name="Chow T.-Y."/>
            <person name="Chen H.-H."/>
            <person name="Chen W.-H."/>
            <person name="Cheng C.-H."/>
            <person name="Lin C.-Y."/>
            <person name="Liu S.-M."/>
            <person name="Chang C.-C."/>
            <person name="Chaw S.-M."/>
        </authorList>
    </citation>
    <scope>NUCLEOTIDE SEQUENCE [LARGE SCALE GENOMIC DNA]</scope>
    <source>
        <strain>cv. Taisugar TS-97</strain>
    </source>
</reference>
<comment type="function">
    <text evidence="1">Component of the cytochrome b6-f complex, which mediates electron transfer between photosystem II (PSII) and photosystem I (PSI), cyclic electron flow around PSI, and state transitions. PetL is important for photoautotrophic growth as well as for electron transfer efficiency and stability of the cytochrome b6-f complex.</text>
</comment>
<comment type="subunit">
    <text evidence="1">The 4 large subunits of the cytochrome b6-f complex are cytochrome b6, subunit IV (17 kDa polypeptide, PetD), cytochrome f and the Rieske protein, while the 4 small subunits are PetG, PetL, PetM and PetN. The complex functions as a dimer.</text>
</comment>
<comment type="subcellular location">
    <subcellularLocation>
        <location evidence="1">Plastid</location>
        <location evidence="1">Chloroplast thylakoid membrane</location>
        <topology evidence="1">Single-pass membrane protein</topology>
    </subcellularLocation>
</comment>
<comment type="similarity">
    <text evidence="1">Belongs to the PetL family.</text>
</comment>